<feature type="chain" id="PRO_0000052490" description="Globin-1">
    <location>
        <begin position="1"/>
        <end position="144"/>
    </location>
</feature>
<feature type="domain" description="Globin" evidence="1">
    <location>
        <begin position="1"/>
        <end position="141"/>
    </location>
</feature>
<feature type="binding site" description="proximal binding residue" evidence="1">
    <location>
        <position position="89"/>
    </location>
    <ligand>
        <name>heme b</name>
        <dbReference type="ChEBI" id="CHEBI:60344"/>
    </ligand>
    <ligandPart>
        <name>Fe</name>
        <dbReference type="ChEBI" id="CHEBI:18248"/>
    </ligandPart>
</feature>
<proteinExistence type="evidence at protein level"/>
<keyword id="KW-0903">Direct protein sequencing</keyword>
<keyword id="KW-0349">Heme</keyword>
<keyword id="KW-0408">Iron</keyword>
<keyword id="KW-0479">Metal-binding</keyword>
<keyword id="KW-0561">Oxygen transport</keyword>
<keyword id="KW-0813">Transport</keyword>
<organism>
    <name type="scientific">Phreagena soyoae</name>
    <name type="common">Deep-sea cold-seep clam</name>
    <name type="synonym">Calyptogena soyoae</name>
    <dbReference type="NCBI Taxonomy" id="1298647"/>
    <lineage>
        <taxon>Eukaryota</taxon>
        <taxon>Metazoa</taxon>
        <taxon>Spiralia</taxon>
        <taxon>Lophotrochozoa</taxon>
        <taxon>Mollusca</taxon>
        <taxon>Bivalvia</taxon>
        <taxon>Autobranchia</taxon>
        <taxon>Heteroconchia</taxon>
        <taxon>Euheterodonta</taxon>
        <taxon>Imparidentia</taxon>
        <taxon>Neoheterodontei</taxon>
        <taxon>Venerida</taxon>
        <taxon>Glossoidea</taxon>
        <taxon>Vesicomyidae</taxon>
        <taxon>Phreagena</taxon>
    </lineage>
</organism>
<protein>
    <recommendedName>
        <fullName>Globin-1</fullName>
    </recommendedName>
    <alternativeName>
        <fullName>Globin I</fullName>
    </alternativeName>
    <alternativeName>
        <fullName>Hb I</fullName>
    </alternativeName>
</protein>
<evidence type="ECO:0000255" key="1">
    <source>
        <dbReference type="PROSITE-ProRule" id="PRU00238"/>
    </source>
</evidence>
<dbReference type="SMR" id="P14805"/>
<dbReference type="GO" id="GO:0020037">
    <property type="term" value="F:heme binding"/>
    <property type="evidence" value="ECO:0007669"/>
    <property type="project" value="InterPro"/>
</dbReference>
<dbReference type="GO" id="GO:0046872">
    <property type="term" value="F:metal ion binding"/>
    <property type="evidence" value="ECO:0007669"/>
    <property type="project" value="UniProtKB-KW"/>
</dbReference>
<dbReference type="GO" id="GO:0019825">
    <property type="term" value="F:oxygen binding"/>
    <property type="evidence" value="ECO:0007669"/>
    <property type="project" value="InterPro"/>
</dbReference>
<dbReference type="GO" id="GO:0005344">
    <property type="term" value="F:oxygen carrier activity"/>
    <property type="evidence" value="ECO:0007669"/>
    <property type="project" value="UniProtKB-KW"/>
</dbReference>
<dbReference type="CDD" id="cd01040">
    <property type="entry name" value="Mb-like"/>
    <property type="match status" value="1"/>
</dbReference>
<dbReference type="Gene3D" id="1.10.490.10">
    <property type="entry name" value="Globins"/>
    <property type="match status" value="1"/>
</dbReference>
<dbReference type="InterPro" id="IPR000971">
    <property type="entry name" value="Globin"/>
</dbReference>
<dbReference type="InterPro" id="IPR009050">
    <property type="entry name" value="Globin-like_sf"/>
</dbReference>
<dbReference type="InterPro" id="IPR012292">
    <property type="entry name" value="Globin/Proto"/>
</dbReference>
<dbReference type="InterPro" id="IPR044399">
    <property type="entry name" value="Mb-like_M"/>
</dbReference>
<dbReference type="Pfam" id="PF00042">
    <property type="entry name" value="Globin"/>
    <property type="match status" value="1"/>
</dbReference>
<dbReference type="SUPFAM" id="SSF46458">
    <property type="entry name" value="Globin-like"/>
    <property type="match status" value="1"/>
</dbReference>
<dbReference type="PROSITE" id="PS01033">
    <property type="entry name" value="GLOBIN"/>
    <property type="match status" value="1"/>
</dbReference>
<name>GLB1_PHRSO</name>
<reference key="1">
    <citation type="journal article" date="1989" name="Biochim. Biophys. Acta">
        <title>Amino acid sequence of the dimeric hemoglobin (Hb I) from the deep-sea cold-seep clam Calyptogena soyoae and the phylogenetic relationship with other molluscan globins.</title>
        <authorList>
            <person name="Suzuki T."/>
            <person name="Takagi T."/>
            <person name="Ohta S."/>
        </authorList>
    </citation>
    <scope>PROTEIN SEQUENCE</scope>
</reference>
<sequence length="144" mass="15733">VSANDIKNVQDTWGKLYDQWDAVHASKFYNKLFKDSEDISEAFVKAGTGSGIAMKRQALVFGAILQEFVANLNDPTALTLKIKGLCATHKTRGITNMELFAFALADLVAYMGTTISFTAAQKASWTAVNDVILHQMSSYFATVA</sequence>
<comment type="subunit">
    <text>Homodimer.</text>
</comment>
<comment type="similarity">
    <text evidence="1">Belongs to the globin family.</text>
</comment>
<accession>P14805</accession>